<reference key="1">
    <citation type="journal article" date="2006" name="Virology">
        <title>Polydnavirus genomes reflect their dual roles as mutualists and pathogens.</title>
        <authorList>
            <person name="Webb B.A."/>
            <person name="Strand M.R."/>
            <person name="Dickey S.E."/>
            <person name="Beck M.H."/>
            <person name="Hilgarth R.S."/>
            <person name="Barney W.E."/>
            <person name="Kadash K."/>
            <person name="Kroemer J.A."/>
            <person name="Lindstrom K.G."/>
            <person name="Rattanadechakul W."/>
            <person name="Shelby K.S."/>
            <person name="Thoetkiattikul H."/>
            <person name="Turnbull M.W."/>
            <person name="Witherell R.A."/>
        </authorList>
    </citation>
    <scope>NUCLEOTIDE SEQUENCE [GENOMIC DNA]</scope>
</reference>
<reference key="2">
    <citation type="journal article" date="2010" name="Insect Biochem. Mol. Biol.">
        <title>Egf1.5 is a second phenoloxidase cascade inhibitor encoded by Microplitis demolitor bracovirus.</title>
        <authorList>
            <person name="Lu Z."/>
            <person name="Beck M.H."/>
            <person name="Strand M.R."/>
        </authorList>
    </citation>
    <scope>FUNCTION</scope>
    <scope>INTERACTION WITH PAP1; PAP3 AND SPH2</scope>
</reference>
<proteinExistence type="evidence at protein level"/>
<keyword id="KW-0945">Host-virus interaction</keyword>
<keyword id="KW-1090">Inhibition of host innate immune response by virus</keyword>
<keyword id="KW-1185">Reference proteome</keyword>
<keyword id="KW-0732">Signal</keyword>
<keyword id="KW-0899">Viral immunoevasion</keyword>
<organism>
    <name type="scientific">Microplitis demolitor bracovirus (isolate Webb)</name>
    <name type="common">MdBV</name>
    <dbReference type="NCBI Taxonomy" id="654919"/>
    <lineage>
        <taxon>Viruses</taxon>
        <taxon>Viruses incertae sedis</taxon>
        <taxon>Polydnaviriformidae</taxon>
        <taxon>Bracoviriform</taxon>
        <taxon>Microplitis demolitor bracovirus</taxon>
    </lineage>
</organism>
<evidence type="ECO:0000255" key="1"/>
<evidence type="ECO:0000269" key="2">
    <source>
    </source>
</evidence>
<evidence type="ECO:0000305" key="3"/>
<gene>
    <name type="primary">O1</name>
</gene>
<organismHost>
    <name type="scientific">Microplitis demolitor</name>
    <name type="common">Parasitoid wasp</name>
    <dbReference type="NCBI Taxonomy" id="69319"/>
</organismHost>
<accession>Q4ZJZ3</accession>
<protein>
    <recommendedName>
        <fullName>Protease inhibitor Egf1.5a</fullName>
    </recommendedName>
</protein>
<dbReference type="EMBL" id="DQ000240">
    <property type="protein sequence ID" value="AAY24525.1"/>
    <property type="molecule type" value="Genomic_DNA"/>
</dbReference>
<dbReference type="KEGG" id="vg:3416068"/>
<dbReference type="Proteomes" id="UP000008168">
    <property type="component" value="Genome"/>
</dbReference>
<dbReference type="GO" id="GO:0052170">
    <property type="term" value="P:symbiont-mediated suppression of host innate immune response"/>
    <property type="evidence" value="ECO:0007669"/>
    <property type="project" value="UniProtKB-KW"/>
</dbReference>
<dbReference type="CDD" id="cd19941">
    <property type="entry name" value="TIL"/>
    <property type="match status" value="1"/>
</dbReference>
<dbReference type="Gene3D" id="2.10.25.10">
    <property type="entry name" value="Laminin"/>
    <property type="match status" value="1"/>
</dbReference>
<dbReference type="InterPro" id="IPR036084">
    <property type="entry name" value="Ser_inhib-like_sf"/>
</dbReference>
<dbReference type="InterPro" id="IPR002919">
    <property type="entry name" value="TIL_dom"/>
</dbReference>
<dbReference type="Pfam" id="PF01826">
    <property type="entry name" value="TIL"/>
    <property type="match status" value="1"/>
</dbReference>
<dbReference type="SUPFAM" id="SSF57567">
    <property type="entry name" value="Serine protease inhibitors"/>
    <property type="match status" value="1"/>
</dbReference>
<comment type="function">
    <text evidence="2">Counteracts the host humoral immune response by inhibiting the processing and the amidolytic activity of host PAP1 and PAP3. Thereby, melanization of host hemolymph, normally producing several reactive intermediates toxic for viruses, is deregulated and proper immune response cannot occur.</text>
</comment>
<comment type="subunit">
    <text evidence="2">Interacts with host PAP1, PAP3 and SPH2.</text>
</comment>
<comment type="similarity">
    <text evidence="3">Belongs to the polydnaviridae EGF-like motif protein family.</text>
</comment>
<name>EG15A_MDBVW</name>
<sequence>MYIDTGIMSNNIFLFAFFALVGLTRIEAMPTKGSEGTWDVDYEDQEHTGITCRENEHYNSTRIECEDECNDRNNKLCYRFQQFCWCNEGYIRNSSHICVKLEDCLKDEEQKSETLASSANNDSSKRLEDDLKLFSHDSVSHTSLEPETQAQKFNGIINEETLDLVFGKPENSWAENKPLETKTQAQKFNGIINEETLDLVFGKPENSWAENKPLETETQAQKFNGIINEETLDLVFGKPENSWAENKPLETKTQAQKFNGIINEETLDLVFGKPENSWAENKPLETKTQAQKFNGIINEETLDLVFGKPENSWAENKPLETKTQTQKFNGIIDQYTRSIVFVF</sequence>
<feature type="signal peptide" evidence="1">
    <location>
        <begin position="1"/>
        <end position="28"/>
    </location>
</feature>
<feature type="chain" id="PRO_0000405389" description="Protease inhibitor Egf1.5a">
    <location>
        <begin position="29"/>
        <end position="343"/>
    </location>
</feature>
<feature type="domain" description="TIL">
    <location>
        <begin position="52"/>
        <end position="104"/>
    </location>
</feature>